<reference key="1">
    <citation type="submission" date="2003-10" db="EMBL/GenBank/DDBJ databases">
        <title>The complete genome sequence of the alkaliphilic Bacillus clausii KSM-K16.</title>
        <authorList>
            <person name="Takaki Y."/>
            <person name="Kageyama Y."/>
            <person name="Shimamura S."/>
            <person name="Suzuki H."/>
            <person name="Nishi S."/>
            <person name="Hatada Y."/>
            <person name="Kawai S."/>
            <person name="Ito S."/>
            <person name="Horikoshi K."/>
        </authorList>
    </citation>
    <scope>NUCLEOTIDE SEQUENCE [LARGE SCALE GENOMIC DNA]</scope>
    <source>
        <strain>KSM-K16</strain>
    </source>
</reference>
<evidence type="ECO:0000255" key="1">
    <source>
        <dbReference type="HAMAP-Rule" id="MF_00469"/>
    </source>
</evidence>
<dbReference type="EC" id="1.14.-.-" evidence="1"/>
<dbReference type="EMBL" id="AP006627">
    <property type="protein sequence ID" value="BAD65189.1"/>
    <property type="molecule type" value="Genomic_DNA"/>
</dbReference>
<dbReference type="RefSeq" id="WP_011247497.1">
    <property type="nucleotide sequence ID" value="NC_006582.1"/>
</dbReference>
<dbReference type="SMR" id="Q5WEM1"/>
<dbReference type="STRING" id="66692.ABC2654"/>
<dbReference type="KEGG" id="bcl:ABC2654"/>
<dbReference type="eggNOG" id="COG1054">
    <property type="taxonomic scope" value="Bacteria"/>
</dbReference>
<dbReference type="HOGENOM" id="CLU_038878_1_0_9"/>
<dbReference type="OrthoDB" id="9778326at2"/>
<dbReference type="Proteomes" id="UP000001168">
    <property type="component" value="Chromosome"/>
</dbReference>
<dbReference type="GO" id="GO:0016705">
    <property type="term" value="F:oxidoreductase activity, acting on paired donors, with incorporation or reduction of molecular oxygen"/>
    <property type="evidence" value="ECO:0007669"/>
    <property type="project" value="UniProtKB-UniRule"/>
</dbReference>
<dbReference type="GO" id="GO:0006400">
    <property type="term" value="P:tRNA modification"/>
    <property type="evidence" value="ECO:0007669"/>
    <property type="project" value="UniProtKB-UniRule"/>
</dbReference>
<dbReference type="CDD" id="cd01518">
    <property type="entry name" value="RHOD_YceA"/>
    <property type="match status" value="1"/>
</dbReference>
<dbReference type="Gene3D" id="3.30.70.100">
    <property type="match status" value="1"/>
</dbReference>
<dbReference type="Gene3D" id="3.40.250.10">
    <property type="entry name" value="Rhodanese-like domain"/>
    <property type="match status" value="1"/>
</dbReference>
<dbReference type="HAMAP" id="MF_00469">
    <property type="entry name" value="TrhO"/>
    <property type="match status" value="1"/>
</dbReference>
<dbReference type="InterPro" id="IPR001763">
    <property type="entry name" value="Rhodanese-like_dom"/>
</dbReference>
<dbReference type="InterPro" id="IPR036873">
    <property type="entry name" value="Rhodanese-like_dom_sf"/>
</dbReference>
<dbReference type="InterPro" id="IPR022111">
    <property type="entry name" value="Rhodanese_C"/>
</dbReference>
<dbReference type="InterPro" id="IPR020936">
    <property type="entry name" value="TrhO"/>
</dbReference>
<dbReference type="InterPro" id="IPR040503">
    <property type="entry name" value="TRHO_N"/>
</dbReference>
<dbReference type="NCBIfam" id="NF001135">
    <property type="entry name" value="PRK00142.1-3"/>
    <property type="match status" value="1"/>
</dbReference>
<dbReference type="PANTHER" id="PTHR43268:SF3">
    <property type="entry name" value="RHODANESE-LIKE DOMAIN-CONTAINING PROTEIN 7-RELATED"/>
    <property type="match status" value="1"/>
</dbReference>
<dbReference type="PANTHER" id="PTHR43268">
    <property type="entry name" value="THIOSULFATE SULFURTRANSFERASE/RHODANESE-LIKE DOMAIN-CONTAINING PROTEIN 2"/>
    <property type="match status" value="1"/>
</dbReference>
<dbReference type="Pfam" id="PF00581">
    <property type="entry name" value="Rhodanese"/>
    <property type="match status" value="1"/>
</dbReference>
<dbReference type="Pfam" id="PF12368">
    <property type="entry name" value="Rhodanese_C"/>
    <property type="match status" value="1"/>
</dbReference>
<dbReference type="Pfam" id="PF17773">
    <property type="entry name" value="UPF0176_N"/>
    <property type="match status" value="1"/>
</dbReference>
<dbReference type="SMART" id="SM00450">
    <property type="entry name" value="RHOD"/>
    <property type="match status" value="1"/>
</dbReference>
<dbReference type="SUPFAM" id="SSF52821">
    <property type="entry name" value="Rhodanese/Cell cycle control phosphatase"/>
    <property type="match status" value="1"/>
</dbReference>
<dbReference type="PROSITE" id="PS50206">
    <property type="entry name" value="RHODANESE_3"/>
    <property type="match status" value="1"/>
</dbReference>
<name>TRHO_SHOC1</name>
<accession>Q5WEM1</accession>
<feature type="chain" id="PRO_0000161443" description="tRNA uridine(34) hydroxylase">
    <location>
        <begin position="1"/>
        <end position="322"/>
    </location>
</feature>
<feature type="domain" description="Rhodanese" evidence="1">
    <location>
        <begin position="126"/>
        <end position="220"/>
    </location>
</feature>
<feature type="active site" description="Cysteine persulfide intermediate" evidence="1">
    <location>
        <position position="180"/>
    </location>
</feature>
<gene>
    <name evidence="1" type="primary">trhO</name>
    <name type="ordered locus">ABC2654</name>
</gene>
<comment type="function">
    <text evidence="1">Catalyzes oxygen-dependent 5-hydroxyuridine (ho5U) modification at position 34 in tRNAs.</text>
</comment>
<comment type="catalytic activity">
    <reaction evidence="1">
        <text>uridine(34) in tRNA + AH2 + O2 = 5-hydroxyuridine(34) in tRNA + A + H2O</text>
        <dbReference type="Rhea" id="RHEA:64224"/>
        <dbReference type="Rhea" id="RHEA-COMP:11727"/>
        <dbReference type="Rhea" id="RHEA-COMP:13381"/>
        <dbReference type="ChEBI" id="CHEBI:13193"/>
        <dbReference type="ChEBI" id="CHEBI:15377"/>
        <dbReference type="ChEBI" id="CHEBI:15379"/>
        <dbReference type="ChEBI" id="CHEBI:17499"/>
        <dbReference type="ChEBI" id="CHEBI:65315"/>
        <dbReference type="ChEBI" id="CHEBI:136877"/>
    </reaction>
</comment>
<comment type="similarity">
    <text evidence="1">Belongs to the TrhO family.</text>
</comment>
<organism>
    <name type="scientific">Shouchella clausii (strain KSM-K16)</name>
    <name type="common">Alkalihalobacillus clausii</name>
    <dbReference type="NCBI Taxonomy" id="66692"/>
    <lineage>
        <taxon>Bacteria</taxon>
        <taxon>Bacillati</taxon>
        <taxon>Bacillota</taxon>
        <taxon>Bacilli</taxon>
        <taxon>Bacillales</taxon>
        <taxon>Bacillaceae</taxon>
        <taxon>Shouchella</taxon>
    </lineage>
</organism>
<protein>
    <recommendedName>
        <fullName evidence="1">tRNA uridine(34) hydroxylase</fullName>
        <ecNumber evidence="1">1.14.-.-</ecNumber>
    </recommendedName>
    <alternativeName>
        <fullName evidence="1">tRNA hydroxylation protein O</fullName>
    </alternativeName>
</protein>
<sequence length="322" mass="37273">MSKDYRVLLYYYYTTIEDPEGFAKEHLAFCKSLQLKGRVLVAKEGINGTVSGLKEHTDAYMEAMKANPLFEGIVFKVDEEEQHVFKKMHVRPRPELVTLRLNEDDVNPNELTGKHLSPKEWREAMLAEDTVVIDARNDYEYDVGHFRGAIRPDIKAFRELPDWIRQNKEQFENKRILTYCTGGIRCEKFSGWLKKEGFEDVAQLDGGIVTYGKDPEVKGELWDGKCYVFDERLTVPINHVAPTVVGKDYFDGKPCERYVNCANPECNKQILCSEENEHKYLRGCTPECRVHPRNLYVKEHQLSPEEHQARLDALGEKLPARL</sequence>
<proteinExistence type="inferred from homology"/>
<keyword id="KW-0560">Oxidoreductase</keyword>
<keyword id="KW-1185">Reference proteome</keyword>
<keyword id="KW-0819">tRNA processing</keyword>